<gene>
    <name type="primary">ints3</name>
    <name type="ORF">si:dkey-27c15.2</name>
</gene>
<evidence type="ECO:0000250" key="1">
    <source>
        <dbReference type="UniProtKB" id="Q68E01"/>
    </source>
</evidence>
<evidence type="ECO:0000256" key="2">
    <source>
        <dbReference type="SAM" id="MobiDB-lite"/>
    </source>
</evidence>
<evidence type="ECO:0000305" key="3"/>
<reference key="1">
    <citation type="journal article" date="2013" name="Nature">
        <title>The zebrafish reference genome sequence and its relationship to the human genome.</title>
        <authorList>
            <person name="Howe K."/>
            <person name="Clark M.D."/>
            <person name="Torroja C.F."/>
            <person name="Torrance J."/>
            <person name="Berthelot C."/>
            <person name="Muffato M."/>
            <person name="Collins J.E."/>
            <person name="Humphray S."/>
            <person name="McLaren K."/>
            <person name="Matthews L."/>
            <person name="McLaren S."/>
            <person name="Sealy I."/>
            <person name="Caccamo M."/>
            <person name="Churcher C."/>
            <person name="Scott C."/>
            <person name="Barrett J.C."/>
            <person name="Koch R."/>
            <person name="Rauch G.J."/>
            <person name="White S."/>
            <person name="Chow W."/>
            <person name="Kilian B."/>
            <person name="Quintais L.T."/>
            <person name="Guerra-Assuncao J.A."/>
            <person name="Zhou Y."/>
            <person name="Gu Y."/>
            <person name="Yen J."/>
            <person name="Vogel J.H."/>
            <person name="Eyre T."/>
            <person name="Redmond S."/>
            <person name="Banerjee R."/>
            <person name="Chi J."/>
            <person name="Fu B."/>
            <person name="Langley E."/>
            <person name="Maguire S.F."/>
            <person name="Laird G.K."/>
            <person name="Lloyd D."/>
            <person name="Kenyon E."/>
            <person name="Donaldson S."/>
            <person name="Sehra H."/>
            <person name="Almeida-King J."/>
            <person name="Loveland J."/>
            <person name="Trevanion S."/>
            <person name="Jones M."/>
            <person name="Quail M."/>
            <person name="Willey D."/>
            <person name="Hunt A."/>
            <person name="Burton J."/>
            <person name="Sims S."/>
            <person name="McLay K."/>
            <person name="Plumb B."/>
            <person name="Davis J."/>
            <person name="Clee C."/>
            <person name="Oliver K."/>
            <person name="Clark R."/>
            <person name="Riddle C."/>
            <person name="Elliot D."/>
            <person name="Threadgold G."/>
            <person name="Harden G."/>
            <person name="Ware D."/>
            <person name="Begum S."/>
            <person name="Mortimore B."/>
            <person name="Kerry G."/>
            <person name="Heath P."/>
            <person name="Phillimore B."/>
            <person name="Tracey A."/>
            <person name="Corby N."/>
            <person name="Dunn M."/>
            <person name="Johnson C."/>
            <person name="Wood J."/>
            <person name="Clark S."/>
            <person name="Pelan S."/>
            <person name="Griffiths G."/>
            <person name="Smith M."/>
            <person name="Glithero R."/>
            <person name="Howden P."/>
            <person name="Barker N."/>
            <person name="Lloyd C."/>
            <person name="Stevens C."/>
            <person name="Harley J."/>
            <person name="Holt K."/>
            <person name="Panagiotidis G."/>
            <person name="Lovell J."/>
            <person name="Beasley H."/>
            <person name="Henderson C."/>
            <person name="Gordon D."/>
            <person name="Auger K."/>
            <person name="Wright D."/>
            <person name="Collins J."/>
            <person name="Raisen C."/>
            <person name="Dyer L."/>
            <person name="Leung K."/>
            <person name="Robertson L."/>
            <person name="Ambridge K."/>
            <person name="Leongamornlert D."/>
            <person name="McGuire S."/>
            <person name="Gilderthorp R."/>
            <person name="Griffiths C."/>
            <person name="Manthravadi D."/>
            <person name="Nichol S."/>
            <person name="Barker G."/>
            <person name="Whitehead S."/>
            <person name="Kay M."/>
            <person name="Brown J."/>
            <person name="Murnane C."/>
            <person name="Gray E."/>
            <person name="Humphries M."/>
            <person name="Sycamore N."/>
            <person name="Barker D."/>
            <person name="Saunders D."/>
            <person name="Wallis J."/>
            <person name="Babbage A."/>
            <person name="Hammond S."/>
            <person name="Mashreghi-Mohammadi M."/>
            <person name="Barr L."/>
            <person name="Martin S."/>
            <person name="Wray P."/>
            <person name="Ellington A."/>
            <person name="Matthews N."/>
            <person name="Ellwood M."/>
            <person name="Woodmansey R."/>
            <person name="Clark G."/>
            <person name="Cooper J."/>
            <person name="Tromans A."/>
            <person name="Grafham D."/>
            <person name="Skuce C."/>
            <person name="Pandian R."/>
            <person name="Andrews R."/>
            <person name="Harrison E."/>
            <person name="Kimberley A."/>
            <person name="Garnett J."/>
            <person name="Fosker N."/>
            <person name="Hall R."/>
            <person name="Garner P."/>
            <person name="Kelly D."/>
            <person name="Bird C."/>
            <person name="Palmer S."/>
            <person name="Gehring I."/>
            <person name="Berger A."/>
            <person name="Dooley C.M."/>
            <person name="Ersan-Urun Z."/>
            <person name="Eser C."/>
            <person name="Geiger H."/>
            <person name="Geisler M."/>
            <person name="Karotki L."/>
            <person name="Kirn A."/>
            <person name="Konantz J."/>
            <person name="Konantz M."/>
            <person name="Oberlander M."/>
            <person name="Rudolph-Geiger S."/>
            <person name="Teucke M."/>
            <person name="Lanz C."/>
            <person name="Raddatz G."/>
            <person name="Osoegawa K."/>
            <person name="Zhu B."/>
            <person name="Rapp A."/>
            <person name="Widaa S."/>
            <person name="Langford C."/>
            <person name="Yang F."/>
            <person name="Schuster S.C."/>
            <person name="Carter N.P."/>
            <person name="Harrow J."/>
            <person name="Ning Z."/>
            <person name="Herrero J."/>
            <person name="Searle S.M."/>
            <person name="Enright A."/>
            <person name="Geisler R."/>
            <person name="Plasterk R.H."/>
            <person name="Lee C."/>
            <person name="Westerfield M."/>
            <person name="de Jong P.J."/>
            <person name="Zon L.I."/>
            <person name="Postlethwait J.H."/>
            <person name="Nusslein-Volhard C."/>
            <person name="Hubbard T.J."/>
            <person name="Roest Crollius H."/>
            <person name="Rogers J."/>
            <person name="Stemple D.L."/>
        </authorList>
    </citation>
    <scope>NUCLEOTIDE SEQUENCE [LARGE SCALE GENOMIC DNA]</scope>
    <source>
        <strain>Tuebingen</strain>
    </source>
</reference>
<reference key="2">
    <citation type="submission" date="2005-03" db="EMBL/GenBank/DDBJ databases">
        <authorList>
            <consortium name="NIH - Zebrafish Gene Collection (ZGC) project"/>
        </authorList>
    </citation>
    <scope>NUCLEOTIDE SEQUENCE [LARGE SCALE MRNA] OF 258-1017</scope>
    <source>
        <tissue>Embryo</tissue>
    </source>
</reference>
<accession>Q1LXC9</accession>
<accession>Q58EQ4</accession>
<organism>
    <name type="scientific">Danio rerio</name>
    <name type="common">Zebrafish</name>
    <name type="synonym">Brachydanio rerio</name>
    <dbReference type="NCBI Taxonomy" id="7955"/>
    <lineage>
        <taxon>Eukaryota</taxon>
        <taxon>Metazoa</taxon>
        <taxon>Chordata</taxon>
        <taxon>Craniata</taxon>
        <taxon>Vertebrata</taxon>
        <taxon>Euteleostomi</taxon>
        <taxon>Actinopterygii</taxon>
        <taxon>Neopterygii</taxon>
        <taxon>Teleostei</taxon>
        <taxon>Ostariophysi</taxon>
        <taxon>Cypriniformes</taxon>
        <taxon>Danionidae</taxon>
        <taxon>Danioninae</taxon>
        <taxon>Danio</taxon>
    </lineage>
</organism>
<feature type="chain" id="PRO_0000259537" description="Integrator complex subunit 3">
    <location>
        <begin position="1"/>
        <end position="1017"/>
    </location>
</feature>
<feature type="region of interest" description="Disordered" evidence="2">
    <location>
        <begin position="952"/>
        <end position="1017"/>
    </location>
</feature>
<feature type="compositionally biased region" description="Acidic residues" evidence="2">
    <location>
        <begin position="983"/>
        <end position="997"/>
    </location>
</feature>
<feature type="sequence conflict" description="In Ref. 2; AAH91803." evidence="3" ref="2">
    <original>L</original>
    <variation>G</variation>
    <location>
        <position position="258"/>
    </location>
</feature>
<sequence>MEPSPAKGKAQGRLLVSTSLDAKDELEERLERCMSITTSITNGLSEREANDALTAHVCKGPQQHEEVCLGLFTLLLTEPPQAQRCYRDLTLVNRDGMNVVLMKINQILMEKFLKLQDVCRTQLVWLVRELVKSGVIGADGVLMTLMKQIAGGDISSKNLWLAENVLDILVDQREWVLKSGMLVAMSLYTYLRLIVDHGTTSLLPLRQREVDFCIGLLRERFMECFIIGRDLVRLLQNVARIPEMELVWRDLLHSPQTLSPQFTGILQLLTSRTSRKFLACRLTPDMETKLLFMTSRVRFGQQKRYQDWFQRQYLSTAESQSLRCDLIRYICGVVHPSNEVLSSDILPRWAIIGWLLTTCTSNVAASNAKLALFYDWLFFNPEKDSIMNIEPAILVMHHSMKPHPAITATLLDFMCRIIPHFFPPLEGQVRQGVFNSLNFIMEKRVLAHLAPLFDNPKLDRELRSMLRERFPEFCSSPSPPTEVKMEESVPLEMDNHVLDKEDGCYDNTDATFSDDEEELNNKGKKREFRFHQLKETYIDEPSDITPFVDQLDEALKERVLQLQKGSDTETHCEVMQEIVDLILEEDFDSEQMSTLASCLAELFKSHFRGDVLPEEITEESLEESVCKPVCLIFRNLCQMQEDNSGFSVLLDLLAELYQKQPKIGYHLLYYLKASKAASGKMSLYESFAQATALGDLHTCLMMDMKACQEDDVRLLCYLTPSIYSEFPDETLRSGELLNMIVAVIDSAQLQELMCHVMMGNLVMFRKDSVLNILIQSLDWETFEQYSTWQLFLAHSIPLETIIPILQHLKYKEHPEALSCLLLQLRREKPSEEMVKMVLSRPYHQEDQFTTSILRHWTAKHDDLLGEHIKALLIKNNNMPRKRQSLRSSSSKLAQLTLEQMLEHLDSLRLSLSNTKNNFFSQTPILQALQHVQASCDEAHKMRFSDLFSLAEEYEDSSKPPKSRRKAPASSPRSRKGAAPQPCNEEESVSSSASEEEDSKPKASKRKRKGSAVGSDSD</sequence>
<name>INT3_DANRE</name>
<dbReference type="EMBL" id="BX465837">
    <property type="protein sequence ID" value="CAK10929.1"/>
    <property type="molecule type" value="Genomic_DNA"/>
</dbReference>
<dbReference type="EMBL" id="BC091803">
    <property type="protein sequence ID" value="AAH91803.1"/>
    <property type="molecule type" value="mRNA"/>
</dbReference>
<dbReference type="RefSeq" id="NP_001038397.1">
    <property type="nucleotide sequence ID" value="NM_001044932.1"/>
</dbReference>
<dbReference type="SMR" id="Q1LXC9"/>
<dbReference type="FunCoup" id="Q1LXC9">
    <property type="interactions" value="2153"/>
</dbReference>
<dbReference type="STRING" id="7955.ENSDARP00000067792"/>
<dbReference type="PaxDb" id="7955-ENSDARP00000067792"/>
<dbReference type="Ensembl" id="ENSDART00000067793">
    <property type="protein sequence ID" value="ENSDARP00000067792"/>
    <property type="gene ID" value="ENSDARG00000016811"/>
</dbReference>
<dbReference type="GeneID" id="560575"/>
<dbReference type="KEGG" id="dre:560575"/>
<dbReference type="AGR" id="ZFIN:ZDB-GENE-060503-634"/>
<dbReference type="CTD" id="65123"/>
<dbReference type="ZFIN" id="ZDB-GENE-060503-634">
    <property type="gene designation" value="ints3"/>
</dbReference>
<dbReference type="eggNOG" id="KOG4262">
    <property type="taxonomic scope" value="Eukaryota"/>
</dbReference>
<dbReference type="HOGENOM" id="CLU_007659_0_0_1"/>
<dbReference type="InParanoid" id="Q1LXC9"/>
<dbReference type="OMA" id="FEQYCLW"/>
<dbReference type="OrthoDB" id="2021145at2759"/>
<dbReference type="PhylomeDB" id="Q1LXC9"/>
<dbReference type="TreeFam" id="TF323623"/>
<dbReference type="Reactome" id="R-DRE-6807505">
    <property type="pathway name" value="RNA polymerase II transcribes snRNA genes"/>
</dbReference>
<dbReference type="PRO" id="PR:Q1LXC9"/>
<dbReference type="Proteomes" id="UP000000437">
    <property type="component" value="Chromosome 19"/>
</dbReference>
<dbReference type="Bgee" id="ENSDARG00000016811">
    <property type="expression patterns" value="Expressed in blastula and 27 other cell types or tissues"/>
</dbReference>
<dbReference type="GO" id="GO:0005737">
    <property type="term" value="C:cytoplasm"/>
    <property type="evidence" value="ECO:0000318"/>
    <property type="project" value="GO_Central"/>
</dbReference>
<dbReference type="GO" id="GO:0160232">
    <property type="term" value="C:INTAC complex"/>
    <property type="evidence" value="ECO:0000250"/>
    <property type="project" value="UniProtKB"/>
</dbReference>
<dbReference type="GO" id="GO:0032039">
    <property type="term" value="C:integrator complex"/>
    <property type="evidence" value="ECO:0000250"/>
    <property type="project" value="UniProtKB"/>
</dbReference>
<dbReference type="GO" id="GO:0005634">
    <property type="term" value="C:nucleus"/>
    <property type="evidence" value="ECO:0000250"/>
    <property type="project" value="UniProtKB"/>
</dbReference>
<dbReference type="GO" id="GO:0070876">
    <property type="term" value="C:SOSS complex"/>
    <property type="evidence" value="ECO:0000250"/>
    <property type="project" value="UniProtKB"/>
</dbReference>
<dbReference type="GO" id="GO:0006974">
    <property type="term" value="P:DNA damage response"/>
    <property type="evidence" value="ECO:0000250"/>
    <property type="project" value="UniProtKB"/>
</dbReference>
<dbReference type="GO" id="GO:0006281">
    <property type="term" value="P:DNA repair"/>
    <property type="evidence" value="ECO:0000250"/>
    <property type="project" value="UniProtKB"/>
</dbReference>
<dbReference type="GO" id="GO:0044818">
    <property type="term" value="P:mitotic G2/M transition checkpoint"/>
    <property type="evidence" value="ECO:0000250"/>
    <property type="project" value="UniProtKB"/>
</dbReference>
<dbReference type="GO" id="GO:0010212">
    <property type="term" value="P:response to ionizing radiation"/>
    <property type="evidence" value="ECO:0000250"/>
    <property type="project" value="UniProtKB"/>
</dbReference>
<dbReference type="GO" id="GO:0160240">
    <property type="term" value="P:RNA polymerase II transcription initiation surveillance"/>
    <property type="evidence" value="ECO:0000250"/>
    <property type="project" value="UniProtKB"/>
</dbReference>
<dbReference type="InterPro" id="IPR056518">
    <property type="entry name" value="HEAT_Ints3_C"/>
</dbReference>
<dbReference type="InterPro" id="IPR045334">
    <property type="entry name" value="INTS3"/>
</dbReference>
<dbReference type="InterPro" id="IPR019333">
    <property type="entry name" value="INTS3_N"/>
</dbReference>
<dbReference type="PANTHER" id="PTHR13587">
    <property type="entry name" value="INTEGRATOR COMPLEX SUBUNIT 3"/>
    <property type="match status" value="1"/>
</dbReference>
<dbReference type="PANTHER" id="PTHR13587:SF7">
    <property type="entry name" value="INTEGRATOR COMPLEX SUBUNIT 3"/>
    <property type="match status" value="1"/>
</dbReference>
<dbReference type="Pfam" id="PF24566">
    <property type="entry name" value="HEAT_Ints3_C"/>
    <property type="match status" value="1"/>
</dbReference>
<dbReference type="Pfam" id="PF10189">
    <property type="entry name" value="Ints3_N"/>
    <property type="match status" value="1"/>
</dbReference>
<keyword id="KW-0963">Cytoplasm</keyword>
<keyword id="KW-0227">DNA damage</keyword>
<keyword id="KW-0234">DNA repair</keyword>
<keyword id="KW-0539">Nucleus</keyword>
<keyword id="KW-1185">Reference proteome</keyword>
<protein>
    <recommendedName>
        <fullName>Integrator complex subunit 3</fullName>
        <shortName>Int3</shortName>
    </recommendedName>
    <alternativeName>
        <fullName>SOSS complex subunit A</fullName>
    </alternativeName>
    <alternativeName>
        <fullName>Sensor of single-strand DNA complex subunit A</fullName>
        <shortName>SOSS-A</shortName>
        <shortName>Sensor of ssDNA subunit A</shortName>
    </alternativeName>
</protein>
<proteinExistence type="evidence at transcript level"/>
<comment type="function">
    <text evidence="1">Component of the integrator complex, a multiprotein complex that terminates RNA polymerase II (Pol II) transcription in the promoter-proximal region of genes. The integrator complex provides a quality checkpoint during transcription elongation by driving premature transcription termination of transcripts that are unfavorably configured for transcriptional elongation: the complex terminates transcription by (1) catalyzing dephosphorylation of the C-terminal domain (CTD) of Pol II subunit POLR2A/RPB1 and SUPT5H/SPT5, (2) degrading the exiting nascent RNA transcript via endonuclease activity and (3) promoting the release of Pol II from bound DNA. The integrator complex is also involved in terminating the synthesis of non-coding Pol II transcripts, such as enhancer RNAs (eRNAs), small nuclear RNAs (snRNAs), telomerase RNAs and long non-coding RNAs (lncRNAs). Within the integrator complex, INTS3 is involved in the post-termination step: INTS3 binds INTS7 in the open conformation of integrator complex and prevents the rebinding of Pol II to the integrator after termination cycle.</text>
</comment>
<comment type="function">
    <text evidence="1">Component of the SOSS complex, a multiprotein complex that functions downstream of the MRN complex to promote DNA repair and G2/M checkpoint. The SOSS complex associates with single-stranded DNA at DNA lesions and influences diverse endpoints in the cellular DNA damage response including cell-cycle checkpoint activation, recombinational repair and maintenance of genomic stability. The SOSS complex is required for efficient homologous recombination-dependent repair of double-strand breaks (DSBs) and ATM-dependent signaling pathways. In the SOSS complex, it is required for the assembly of the complex and for stabilization of the complex at DNA damage sites.</text>
</comment>
<comment type="subunit">
    <text evidence="1">Component of the Integrator complex, composed of core subunits INTS1, INTS2, INTS3, INTS4, INTS5, INTS6, INTS7, INTS8, INTS9/RC74, INTS10, INTS11/CPSF3L, INTS12, INTS13, INTS14 and INTS15. The core complex associates with protein phosphatase 2A subunits PPP2CA and PPP2R1A, to form the Integrator-PP2A (INTAC) complex. Component of the SOSS complex.</text>
</comment>
<comment type="subcellular location">
    <subcellularLocation>
        <location evidence="1">Nucleus</location>
    </subcellularLocation>
    <subcellularLocation>
        <location evidence="1">Cytoplasm</location>
    </subcellularLocation>
    <text evidence="1">Localizes to nuclear foci following DNA damage.</text>
</comment>
<comment type="similarity">
    <text evidence="3">Belongs to the Integrator subunit 3 family.</text>
</comment>